<reference key="1">
    <citation type="journal article" date="2004" name="Genome Res.">
        <title>The genome sequence of Mycoplasma mycoides subsp. mycoides SC type strain PG1T, the causative agent of contagious bovine pleuropneumonia (CBPP).</title>
        <authorList>
            <person name="Westberg J."/>
            <person name="Persson A."/>
            <person name="Holmberg A."/>
            <person name="Goesmann A."/>
            <person name="Lundeberg J."/>
            <person name="Johansson K.-E."/>
            <person name="Pettersson B."/>
            <person name="Uhlen M."/>
        </authorList>
    </citation>
    <scope>NUCLEOTIDE SEQUENCE [LARGE SCALE GENOMIC DNA]</scope>
    <source>
        <strain>CCUG 32753 / NCTC 10114 / PG1</strain>
    </source>
</reference>
<accession>Q6MTR3</accession>
<keyword id="KW-0030">Aminoacyl-tRNA synthetase</keyword>
<keyword id="KW-0067">ATP-binding</keyword>
<keyword id="KW-0963">Cytoplasm</keyword>
<keyword id="KW-0436">Ligase</keyword>
<keyword id="KW-0547">Nucleotide-binding</keyword>
<keyword id="KW-0648">Protein biosynthesis</keyword>
<keyword id="KW-1185">Reference proteome</keyword>
<protein>
    <recommendedName>
        <fullName evidence="1">Aspartate--tRNA ligase</fullName>
        <ecNumber evidence="1">6.1.1.12</ecNumber>
    </recommendedName>
    <alternativeName>
        <fullName evidence="1">Aspartyl-tRNA synthetase</fullName>
        <shortName evidence="1">AspRS</shortName>
    </alternativeName>
</protein>
<name>SYD_MYCMS</name>
<feature type="chain" id="PRO_0000110904" description="Aspartate--tRNA ligase">
    <location>
        <begin position="1"/>
        <end position="574"/>
    </location>
</feature>
<feature type="region of interest" description="Aspartate" evidence="1">
    <location>
        <begin position="193"/>
        <end position="196"/>
    </location>
</feature>
<feature type="binding site" evidence="1">
    <location>
        <position position="169"/>
    </location>
    <ligand>
        <name>L-aspartate</name>
        <dbReference type="ChEBI" id="CHEBI:29991"/>
    </ligand>
</feature>
<feature type="binding site" evidence="1">
    <location>
        <begin position="215"/>
        <end position="217"/>
    </location>
    <ligand>
        <name>ATP</name>
        <dbReference type="ChEBI" id="CHEBI:30616"/>
    </ligand>
</feature>
<feature type="binding site" evidence="1">
    <location>
        <position position="215"/>
    </location>
    <ligand>
        <name>L-aspartate</name>
        <dbReference type="ChEBI" id="CHEBI:29991"/>
    </ligand>
</feature>
<feature type="binding site" evidence="1">
    <location>
        <position position="224"/>
    </location>
    <ligand>
        <name>ATP</name>
        <dbReference type="ChEBI" id="CHEBI:30616"/>
    </ligand>
</feature>
<feature type="binding site" evidence="1">
    <location>
        <position position="437"/>
    </location>
    <ligand>
        <name>L-aspartate</name>
        <dbReference type="ChEBI" id="CHEBI:29991"/>
    </ligand>
</feature>
<feature type="binding site" evidence="1">
    <location>
        <position position="471"/>
    </location>
    <ligand>
        <name>ATP</name>
        <dbReference type="ChEBI" id="CHEBI:30616"/>
    </ligand>
</feature>
<feature type="binding site" evidence="1">
    <location>
        <position position="478"/>
    </location>
    <ligand>
        <name>L-aspartate</name>
        <dbReference type="ChEBI" id="CHEBI:29991"/>
    </ligand>
</feature>
<feature type="binding site" evidence="1">
    <location>
        <begin position="523"/>
        <end position="526"/>
    </location>
    <ligand>
        <name>ATP</name>
        <dbReference type="ChEBI" id="CHEBI:30616"/>
    </ligand>
</feature>
<proteinExistence type="inferred from homology"/>
<comment type="function">
    <text evidence="1">Catalyzes the attachment of L-aspartate to tRNA(Asp) in a two-step reaction: L-aspartate is first activated by ATP to form Asp-AMP and then transferred to the acceptor end of tRNA(Asp).</text>
</comment>
<comment type="catalytic activity">
    <reaction evidence="1">
        <text>tRNA(Asp) + L-aspartate + ATP = L-aspartyl-tRNA(Asp) + AMP + diphosphate</text>
        <dbReference type="Rhea" id="RHEA:19649"/>
        <dbReference type="Rhea" id="RHEA-COMP:9660"/>
        <dbReference type="Rhea" id="RHEA-COMP:9678"/>
        <dbReference type="ChEBI" id="CHEBI:29991"/>
        <dbReference type="ChEBI" id="CHEBI:30616"/>
        <dbReference type="ChEBI" id="CHEBI:33019"/>
        <dbReference type="ChEBI" id="CHEBI:78442"/>
        <dbReference type="ChEBI" id="CHEBI:78516"/>
        <dbReference type="ChEBI" id="CHEBI:456215"/>
        <dbReference type="EC" id="6.1.1.12"/>
    </reaction>
</comment>
<comment type="subunit">
    <text evidence="1">Homodimer.</text>
</comment>
<comment type="subcellular location">
    <subcellularLocation>
        <location evidence="1">Cytoplasm</location>
    </subcellularLocation>
</comment>
<comment type="similarity">
    <text evidence="1">Belongs to the class-II aminoacyl-tRNA synthetase family. Type 1 subfamily.</text>
</comment>
<gene>
    <name evidence="1" type="primary">aspS</name>
    <name type="ordered locus">MSC_0333</name>
</gene>
<dbReference type="EC" id="6.1.1.12" evidence="1"/>
<dbReference type="EMBL" id="BX293980">
    <property type="protein sequence ID" value="CAE76973.1"/>
    <property type="molecule type" value="Genomic_DNA"/>
</dbReference>
<dbReference type="RefSeq" id="NP_975331.1">
    <property type="nucleotide sequence ID" value="NC_005364.2"/>
</dbReference>
<dbReference type="RefSeq" id="WP_011166529.1">
    <property type="nucleotide sequence ID" value="NC_005364.2"/>
</dbReference>
<dbReference type="SMR" id="Q6MTR3"/>
<dbReference type="STRING" id="272632.MSC_0333"/>
<dbReference type="KEGG" id="mmy:MSC_0333"/>
<dbReference type="PATRIC" id="fig|272632.4.peg.359"/>
<dbReference type="eggNOG" id="COG0173">
    <property type="taxonomic scope" value="Bacteria"/>
</dbReference>
<dbReference type="HOGENOM" id="CLU_014330_3_2_14"/>
<dbReference type="Proteomes" id="UP000001016">
    <property type="component" value="Chromosome"/>
</dbReference>
<dbReference type="GO" id="GO:0005737">
    <property type="term" value="C:cytoplasm"/>
    <property type="evidence" value="ECO:0007669"/>
    <property type="project" value="UniProtKB-SubCell"/>
</dbReference>
<dbReference type="GO" id="GO:0004815">
    <property type="term" value="F:aspartate-tRNA ligase activity"/>
    <property type="evidence" value="ECO:0007669"/>
    <property type="project" value="UniProtKB-UniRule"/>
</dbReference>
<dbReference type="GO" id="GO:0005524">
    <property type="term" value="F:ATP binding"/>
    <property type="evidence" value="ECO:0007669"/>
    <property type="project" value="UniProtKB-UniRule"/>
</dbReference>
<dbReference type="GO" id="GO:0003676">
    <property type="term" value="F:nucleic acid binding"/>
    <property type="evidence" value="ECO:0007669"/>
    <property type="project" value="InterPro"/>
</dbReference>
<dbReference type="GO" id="GO:0006422">
    <property type="term" value="P:aspartyl-tRNA aminoacylation"/>
    <property type="evidence" value="ECO:0007669"/>
    <property type="project" value="UniProtKB-UniRule"/>
</dbReference>
<dbReference type="CDD" id="cd00777">
    <property type="entry name" value="AspRS_core"/>
    <property type="match status" value="1"/>
</dbReference>
<dbReference type="CDD" id="cd04317">
    <property type="entry name" value="EcAspRS_like_N"/>
    <property type="match status" value="1"/>
</dbReference>
<dbReference type="Gene3D" id="3.30.930.10">
    <property type="entry name" value="Bira Bifunctional Protein, Domain 2"/>
    <property type="match status" value="1"/>
</dbReference>
<dbReference type="Gene3D" id="3.30.1360.30">
    <property type="entry name" value="GAD-like domain"/>
    <property type="match status" value="1"/>
</dbReference>
<dbReference type="Gene3D" id="2.40.50.140">
    <property type="entry name" value="Nucleic acid-binding proteins"/>
    <property type="match status" value="1"/>
</dbReference>
<dbReference type="HAMAP" id="MF_00044">
    <property type="entry name" value="Asp_tRNA_synth_type1"/>
    <property type="match status" value="1"/>
</dbReference>
<dbReference type="InterPro" id="IPR004364">
    <property type="entry name" value="Aa-tRNA-synt_II"/>
</dbReference>
<dbReference type="InterPro" id="IPR006195">
    <property type="entry name" value="aa-tRNA-synth_II"/>
</dbReference>
<dbReference type="InterPro" id="IPR045864">
    <property type="entry name" value="aa-tRNA-synth_II/BPL/LPL"/>
</dbReference>
<dbReference type="InterPro" id="IPR004524">
    <property type="entry name" value="Asp-tRNA-ligase_1"/>
</dbReference>
<dbReference type="InterPro" id="IPR047089">
    <property type="entry name" value="Asp-tRNA-ligase_1_N"/>
</dbReference>
<dbReference type="InterPro" id="IPR002312">
    <property type="entry name" value="Asp/Asn-tRNA-synth_IIb"/>
</dbReference>
<dbReference type="InterPro" id="IPR047090">
    <property type="entry name" value="AspRS_core"/>
</dbReference>
<dbReference type="InterPro" id="IPR004115">
    <property type="entry name" value="GAD-like_sf"/>
</dbReference>
<dbReference type="InterPro" id="IPR029351">
    <property type="entry name" value="GAD_dom"/>
</dbReference>
<dbReference type="InterPro" id="IPR012340">
    <property type="entry name" value="NA-bd_OB-fold"/>
</dbReference>
<dbReference type="InterPro" id="IPR004365">
    <property type="entry name" value="NA-bd_OB_tRNA"/>
</dbReference>
<dbReference type="NCBIfam" id="TIGR00459">
    <property type="entry name" value="aspS_bact"/>
    <property type="match status" value="1"/>
</dbReference>
<dbReference type="NCBIfam" id="NF001750">
    <property type="entry name" value="PRK00476.1"/>
    <property type="match status" value="1"/>
</dbReference>
<dbReference type="PANTHER" id="PTHR22594:SF5">
    <property type="entry name" value="ASPARTATE--TRNA LIGASE, MITOCHONDRIAL"/>
    <property type="match status" value="1"/>
</dbReference>
<dbReference type="PANTHER" id="PTHR22594">
    <property type="entry name" value="ASPARTYL/LYSYL-TRNA SYNTHETASE"/>
    <property type="match status" value="1"/>
</dbReference>
<dbReference type="Pfam" id="PF02938">
    <property type="entry name" value="GAD"/>
    <property type="match status" value="1"/>
</dbReference>
<dbReference type="Pfam" id="PF00152">
    <property type="entry name" value="tRNA-synt_2"/>
    <property type="match status" value="1"/>
</dbReference>
<dbReference type="Pfam" id="PF01336">
    <property type="entry name" value="tRNA_anti-codon"/>
    <property type="match status" value="1"/>
</dbReference>
<dbReference type="PRINTS" id="PR01042">
    <property type="entry name" value="TRNASYNTHASP"/>
</dbReference>
<dbReference type="SUPFAM" id="SSF55681">
    <property type="entry name" value="Class II aaRS and biotin synthetases"/>
    <property type="match status" value="1"/>
</dbReference>
<dbReference type="SUPFAM" id="SSF55261">
    <property type="entry name" value="GAD domain-like"/>
    <property type="match status" value="1"/>
</dbReference>
<dbReference type="SUPFAM" id="SSF50249">
    <property type="entry name" value="Nucleic acid-binding proteins"/>
    <property type="match status" value="1"/>
</dbReference>
<dbReference type="PROSITE" id="PS50862">
    <property type="entry name" value="AA_TRNA_LIGASE_II"/>
    <property type="match status" value="1"/>
</dbReference>
<sequence length="574" mass="66670">MKRTHTCGELTINNIDQEVILQGWVKKIRKLGAMVFIDLKDRYGITQLVVDQQHIDLINNVKNEYVIEIKGNVVKRKSINKELVTGDIEVIVKELFIINKSELTPFVLENDVNVNEDTRLTYRYLDLRRPVMQNNLIIRAKINHIIRNFLTDSNFLEVETPYFAKSTPEGARDFLVPSRLNKNKFYALPQSPQLFKQLLMISGIDRYYQIVRCFRDEDLRIDRQPEFTQLDLEMSFATSEDVMQISESLIKKILKEVKNFEIKEPLLRLSYKDAIDLYGSDKPDLRYDLKIHTLNDIFKNTNIKFLNNPDLFIRAICIDQLLSKKQLEDLNQQAKQFHFNSIAFIKFENNNWSGSLASQLTENEKELLIKEFDIKNKATIVLNIGKYEQISQLMGAIRISLAKMFNLETKDDFKLLWVVDFPLFEFSEQENRYVAAHHPFTSPKEECLTDFDTNKKDALTCAYDLVMNGFEIGGGSQRITNPEIQQRMFDAVELTTQQVETNFGWFMNAYKYGAPYHAGIAWGLDRISMIVTDSNSIRDVIAFPKNSLGIDMMSNAPDLVSEKQLEELNIKIVK</sequence>
<evidence type="ECO:0000255" key="1">
    <source>
        <dbReference type="HAMAP-Rule" id="MF_00044"/>
    </source>
</evidence>
<organism>
    <name type="scientific">Mycoplasma mycoides subsp. mycoides SC (strain CCUG 32753 / NCTC 10114 / PG1)</name>
    <dbReference type="NCBI Taxonomy" id="272632"/>
    <lineage>
        <taxon>Bacteria</taxon>
        <taxon>Bacillati</taxon>
        <taxon>Mycoplasmatota</taxon>
        <taxon>Mollicutes</taxon>
        <taxon>Mycoplasmataceae</taxon>
        <taxon>Mycoplasma</taxon>
    </lineage>
</organism>